<organism>
    <name type="scientific">Campylobacter hominis (strain ATCC BAA-381 / DSM 21671 / CCUG 45161 / LMG 19568 / NCTC 13146 / CH001A)</name>
    <dbReference type="NCBI Taxonomy" id="360107"/>
    <lineage>
        <taxon>Bacteria</taxon>
        <taxon>Pseudomonadati</taxon>
        <taxon>Campylobacterota</taxon>
        <taxon>Epsilonproteobacteria</taxon>
        <taxon>Campylobacterales</taxon>
        <taxon>Campylobacteraceae</taxon>
        <taxon>Campylobacter</taxon>
    </lineage>
</organism>
<feature type="chain" id="PRO_1000050303" description="Phosphoribosylformylglycinamidine synthase subunit PurL">
    <location>
        <begin position="1"/>
        <end position="732"/>
    </location>
</feature>
<feature type="active site" evidence="1">
    <location>
        <position position="42"/>
    </location>
</feature>
<feature type="active site" description="Proton acceptor" evidence="1">
    <location>
        <position position="88"/>
    </location>
</feature>
<feature type="binding site" evidence="1">
    <location>
        <position position="45"/>
    </location>
    <ligand>
        <name>ATP</name>
        <dbReference type="ChEBI" id="CHEBI:30616"/>
    </ligand>
</feature>
<feature type="binding site" evidence="1">
    <location>
        <position position="84"/>
    </location>
    <ligand>
        <name>ATP</name>
        <dbReference type="ChEBI" id="CHEBI:30616"/>
    </ligand>
</feature>
<feature type="binding site" evidence="1">
    <location>
        <position position="86"/>
    </location>
    <ligand>
        <name>Mg(2+)</name>
        <dbReference type="ChEBI" id="CHEBI:18420"/>
        <label>1</label>
    </ligand>
</feature>
<feature type="binding site" evidence="1">
    <location>
        <begin position="87"/>
        <end position="90"/>
    </location>
    <ligand>
        <name>substrate</name>
    </ligand>
</feature>
<feature type="binding site" evidence="1">
    <location>
        <position position="109"/>
    </location>
    <ligand>
        <name>substrate</name>
    </ligand>
</feature>
<feature type="binding site" evidence="1">
    <location>
        <position position="110"/>
    </location>
    <ligand>
        <name>Mg(2+)</name>
        <dbReference type="ChEBI" id="CHEBI:18420"/>
        <label>2</label>
    </ligand>
</feature>
<feature type="binding site" evidence="1">
    <location>
        <position position="238"/>
    </location>
    <ligand>
        <name>substrate</name>
    </ligand>
</feature>
<feature type="binding site" evidence="1">
    <location>
        <position position="266"/>
    </location>
    <ligand>
        <name>Mg(2+)</name>
        <dbReference type="ChEBI" id="CHEBI:18420"/>
        <label>2</label>
    </ligand>
</feature>
<feature type="binding site" evidence="1">
    <location>
        <begin position="310"/>
        <end position="312"/>
    </location>
    <ligand>
        <name>substrate</name>
    </ligand>
</feature>
<feature type="binding site" evidence="1">
    <location>
        <position position="496"/>
    </location>
    <ligand>
        <name>ATP</name>
        <dbReference type="ChEBI" id="CHEBI:30616"/>
    </ligand>
</feature>
<feature type="binding site" evidence="1">
    <location>
        <position position="533"/>
    </location>
    <ligand>
        <name>ATP</name>
        <dbReference type="ChEBI" id="CHEBI:30616"/>
    </ligand>
</feature>
<feature type="binding site" evidence="1">
    <location>
        <position position="534"/>
    </location>
    <ligand>
        <name>Mg(2+)</name>
        <dbReference type="ChEBI" id="CHEBI:18420"/>
        <label>1</label>
    </ligand>
</feature>
<feature type="binding site" evidence="1">
    <location>
        <position position="536"/>
    </location>
    <ligand>
        <name>substrate</name>
    </ligand>
</feature>
<protein>
    <recommendedName>
        <fullName evidence="1">Phosphoribosylformylglycinamidine synthase subunit PurL</fullName>
        <shortName evidence="1">FGAM synthase</shortName>
        <ecNumber evidence="1">6.3.5.3</ecNumber>
    </recommendedName>
    <alternativeName>
        <fullName evidence="1">Formylglycinamide ribonucleotide amidotransferase subunit II</fullName>
        <shortName evidence="1">FGAR amidotransferase II</shortName>
        <shortName evidence="1">FGAR-AT II</shortName>
    </alternativeName>
    <alternativeName>
        <fullName evidence="1">Glutamine amidotransferase PurL</fullName>
    </alternativeName>
    <alternativeName>
        <fullName evidence="1">Phosphoribosylformylglycinamidine synthase subunit II</fullName>
    </alternativeName>
</protein>
<proteinExistence type="inferred from homology"/>
<gene>
    <name evidence="1" type="primary">purL</name>
    <name type="ordered locus">CHAB381_0667</name>
</gene>
<name>PURL_CAMHC</name>
<keyword id="KW-0067">ATP-binding</keyword>
<keyword id="KW-0963">Cytoplasm</keyword>
<keyword id="KW-0436">Ligase</keyword>
<keyword id="KW-0460">Magnesium</keyword>
<keyword id="KW-0479">Metal-binding</keyword>
<keyword id="KW-0547">Nucleotide-binding</keyword>
<keyword id="KW-0658">Purine biosynthesis</keyword>
<keyword id="KW-1185">Reference proteome</keyword>
<dbReference type="EC" id="6.3.5.3" evidence="1"/>
<dbReference type="EMBL" id="CP000776">
    <property type="protein sequence ID" value="ABS52168.1"/>
    <property type="molecule type" value="Genomic_DNA"/>
</dbReference>
<dbReference type="RefSeq" id="WP_012108535.1">
    <property type="nucleotide sequence ID" value="NC_009714.1"/>
</dbReference>
<dbReference type="SMR" id="A7I157"/>
<dbReference type="STRING" id="360107.CHAB381_0667"/>
<dbReference type="KEGG" id="cha:CHAB381_0667"/>
<dbReference type="eggNOG" id="COG0046">
    <property type="taxonomic scope" value="Bacteria"/>
</dbReference>
<dbReference type="HOGENOM" id="CLU_003100_0_1_7"/>
<dbReference type="OrthoDB" id="9804441at2"/>
<dbReference type="UniPathway" id="UPA00074">
    <property type="reaction ID" value="UER00128"/>
</dbReference>
<dbReference type="Proteomes" id="UP000002407">
    <property type="component" value="Chromosome"/>
</dbReference>
<dbReference type="GO" id="GO:0005737">
    <property type="term" value="C:cytoplasm"/>
    <property type="evidence" value="ECO:0007669"/>
    <property type="project" value="UniProtKB-SubCell"/>
</dbReference>
<dbReference type="GO" id="GO:0005524">
    <property type="term" value="F:ATP binding"/>
    <property type="evidence" value="ECO:0007669"/>
    <property type="project" value="UniProtKB-UniRule"/>
</dbReference>
<dbReference type="GO" id="GO:0000287">
    <property type="term" value="F:magnesium ion binding"/>
    <property type="evidence" value="ECO:0007669"/>
    <property type="project" value="UniProtKB-UniRule"/>
</dbReference>
<dbReference type="GO" id="GO:0004642">
    <property type="term" value="F:phosphoribosylformylglycinamidine synthase activity"/>
    <property type="evidence" value="ECO:0007669"/>
    <property type="project" value="UniProtKB-UniRule"/>
</dbReference>
<dbReference type="GO" id="GO:0006189">
    <property type="term" value="P:'de novo' IMP biosynthetic process"/>
    <property type="evidence" value="ECO:0007669"/>
    <property type="project" value="UniProtKB-UniRule"/>
</dbReference>
<dbReference type="CDD" id="cd02203">
    <property type="entry name" value="PurL_repeat1"/>
    <property type="match status" value="1"/>
</dbReference>
<dbReference type="CDD" id="cd02204">
    <property type="entry name" value="PurL_repeat2"/>
    <property type="match status" value="1"/>
</dbReference>
<dbReference type="FunFam" id="3.30.1330.10:FF:000004">
    <property type="entry name" value="Phosphoribosylformylglycinamidine synthase subunit PurL"/>
    <property type="match status" value="1"/>
</dbReference>
<dbReference type="Gene3D" id="3.90.650.10">
    <property type="entry name" value="PurM-like C-terminal domain"/>
    <property type="match status" value="2"/>
</dbReference>
<dbReference type="Gene3D" id="3.30.1330.10">
    <property type="entry name" value="PurM-like, N-terminal domain"/>
    <property type="match status" value="2"/>
</dbReference>
<dbReference type="HAMAP" id="MF_00420">
    <property type="entry name" value="PurL_2"/>
    <property type="match status" value="1"/>
</dbReference>
<dbReference type="InterPro" id="IPR010074">
    <property type="entry name" value="PRibForGlyAmidine_synth_PurL"/>
</dbReference>
<dbReference type="InterPro" id="IPR041609">
    <property type="entry name" value="PurL_linker"/>
</dbReference>
<dbReference type="InterPro" id="IPR010918">
    <property type="entry name" value="PurM-like_C_dom"/>
</dbReference>
<dbReference type="InterPro" id="IPR036676">
    <property type="entry name" value="PurM-like_C_sf"/>
</dbReference>
<dbReference type="InterPro" id="IPR016188">
    <property type="entry name" value="PurM-like_N"/>
</dbReference>
<dbReference type="InterPro" id="IPR036921">
    <property type="entry name" value="PurM-like_N_sf"/>
</dbReference>
<dbReference type="NCBIfam" id="TIGR01736">
    <property type="entry name" value="FGAM_synth_II"/>
    <property type="match status" value="1"/>
</dbReference>
<dbReference type="NCBIfam" id="NF002290">
    <property type="entry name" value="PRK01213.1"/>
    <property type="match status" value="1"/>
</dbReference>
<dbReference type="PANTHER" id="PTHR43555">
    <property type="entry name" value="PHOSPHORIBOSYLFORMYLGLYCINAMIDINE SYNTHASE SUBUNIT PURL"/>
    <property type="match status" value="1"/>
</dbReference>
<dbReference type="PANTHER" id="PTHR43555:SF1">
    <property type="entry name" value="PHOSPHORIBOSYLFORMYLGLYCINAMIDINE SYNTHASE SUBUNIT PURL"/>
    <property type="match status" value="1"/>
</dbReference>
<dbReference type="Pfam" id="PF00586">
    <property type="entry name" value="AIRS"/>
    <property type="match status" value="2"/>
</dbReference>
<dbReference type="Pfam" id="PF02769">
    <property type="entry name" value="AIRS_C"/>
    <property type="match status" value="1"/>
</dbReference>
<dbReference type="Pfam" id="PF18072">
    <property type="entry name" value="FGAR-AT_linker"/>
    <property type="match status" value="1"/>
</dbReference>
<dbReference type="PIRSF" id="PIRSF001587">
    <property type="entry name" value="FGAM_synthase_II"/>
    <property type="match status" value="1"/>
</dbReference>
<dbReference type="SUPFAM" id="SSF56042">
    <property type="entry name" value="PurM C-terminal domain-like"/>
    <property type="match status" value="2"/>
</dbReference>
<dbReference type="SUPFAM" id="SSF55326">
    <property type="entry name" value="PurM N-terminal domain-like"/>
    <property type="match status" value="2"/>
</dbReference>
<comment type="function">
    <text evidence="1">Part of the phosphoribosylformylglycinamidine synthase complex involved in the purines biosynthetic pathway. Catalyzes the ATP-dependent conversion of formylglycinamide ribonucleotide (FGAR) and glutamine to yield formylglycinamidine ribonucleotide (FGAM) and glutamate. The FGAM synthase complex is composed of three subunits. PurQ produces an ammonia molecule by converting glutamine to glutamate. PurL transfers the ammonia molecule to FGAR to form FGAM in an ATP-dependent manner. PurS interacts with PurQ and PurL and is thought to assist in the transfer of the ammonia molecule from PurQ to PurL.</text>
</comment>
<comment type="catalytic activity">
    <reaction evidence="1">
        <text>N(2)-formyl-N(1)-(5-phospho-beta-D-ribosyl)glycinamide + L-glutamine + ATP + H2O = 2-formamido-N(1)-(5-O-phospho-beta-D-ribosyl)acetamidine + L-glutamate + ADP + phosphate + H(+)</text>
        <dbReference type="Rhea" id="RHEA:17129"/>
        <dbReference type="ChEBI" id="CHEBI:15377"/>
        <dbReference type="ChEBI" id="CHEBI:15378"/>
        <dbReference type="ChEBI" id="CHEBI:29985"/>
        <dbReference type="ChEBI" id="CHEBI:30616"/>
        <dbReference type="ChEBI" id="CHEBI:43474"/>
        <dbReference type="ChEBI" id="CHEBI:58359"/>
        <dbReference type="ChEBI" id="CHEBI:147286"/>
        <dbReference type="ChEBI" id="CHEBI:147287"/>
        <dbReference type="ChEBI" id="CHEBI:456216"/>
        <dbReference type="EC" id="6.3.5.3"/>
    </reaction>
</comment>
<comment type="pathway">
    <text evidence="1">Purine metabolism; IMP biosynthesis via de novo pathway; 5-amino-1-(5-phospho-D-ribosyl)imidazole from N(2)-formyl-N(1)-(5-phospho-D-ribosyl)glycinamide: step 1/2.</text>
</comment>
<comment type="subunit">
    <text evidence="1">Monomer. Part of the FGAM synthase complex composed of 1 PurL, 1 PurQ and 2 PurS subunits.</text>
</comment>
<comment type="subcellular location">
    <subcellularLocation>
        <location evidence="1">Cytoplasm</location>
    </subcellularLocation>
</comment>
<comment type="similarity">
    <text evidence="1">Belongs to the FGAMS family.</text>
</comment>
<sequence length="732" mass="79344">MDQKTIKAHKISDSEYKKILEILGREPNLLELGIFSSMWSEHCSYKSSKKYLNGFPTKAPWVIQGPGENAGVIDIGDGMAAVFKMESHNHPSYIEPFQGAATGVGGILRDIFTMGARVEVNMNSLRFGDVIGDSKVNRYQRYLVKGVVGGIAHYGNCMGIPTIGGETTFDSSFNGNILVNAFALGIVKSDEIFYGKAEGAGNPVIYVGSKTGRDGLGGAVMASDSFNEENKSLRPTVQVGDPFAEKLLMEACLELFKKGYIIGIQDMGAAGLTSSSFEMAGRSGSGMIMHLDKVPMRENEMTPYELMLSESQERMLICAKKGCEEKVKEIFAKWDLDAEVIGEVTNSGNMELFWYGKKVADVPIAPLSEAAPILDRPVKKPAYLDKIASGNLCGCGVSKISNKEAFDKIFAEPEILNKNFIYDQYDANIGTNTIKKPGFLGAAAIRVKENGVNLCMAMDCNSRMNYINPRIGAALAVAASGRKVAMSGAVPLAITDCLNYGNPQNEEVMWQFAQGCEGIKAACKALNTPVVSGNVSLYNETDGVSIQPTPAIVMVGTAKNALLPSHFTKNGVNVYLIGDTKGVFAGSLYMKVVENRITGTLPEIDFIKERALWDLVIEANKCEILEFANSVGVGGVAITLAKMACIEQIGGNFDMIVDDDRDIFDESFSRAIVGVKNETEFLKLAKKSGLKFTKLGASGGETFKINEISVKIKQLAEIYFNKFSQIIKGETF</sequence>
<reference key="1">
    <citation type="submission" date="2007-07" db="EMBL/GenBank/DDBJ databases">
        <title>Complete genome sequence of Campylobacter hominis ATCC BAA-381, a commensal isolated from the human gastrointestinal tract.</title>
        <authorList>
            <person name="Fouts D.E."/>
            <person name="Mongodin E.F."/>
            <person name="Puiu D."/>
            <person name="Sebastian Y."/>
            <person name="Miller W.G."/>
            <person name="Mandrell R.E."/>
            <person name="Nelson K.E."/>
        </authorList>
    </citation>
    <scope>NUCLEOTIDE SEQUENCE [LARGE SCALE GENOMIC DNA]</scope>
    <source>
        <strain>ATCC BAA-381 / DSM 21671 / CCUG 45161 / LMG 19568 / NCTC 13146 / CH001A</strain>
    </source>
</reference>
<evidence type="ECO:0000255" key="1">
    <source>
        <dbReference type="HAMAP-Rule" id="MF_00420"/>
    </source>
</evidence>
<accession>A7I157</accession>